<feature type="chain" id="PRO_0000384797" description="Ribosome maturation factor RimP">
    <location>
        <begin position="1"/>
        <end position="164"/>
    </location>
</feature>
<proteinExistence type="inferred from homology"/>
<organism>
    <name type="scientific">Thermodesulfovibrio yellowstonii (strain ATCC 51303 / DSM 11347 / YP87)</name>
    <dbReference type="NCBI Taxonomy" id="289376"/>
    <lineage>
        <taxon>Bacteria</taxon>
        <taxon>Pseudomonadati</taxon>
        <taxon>Nitrospirota</taxon>
        <taxon>Thermodesulfovibrionia</taxon>
        <taxon>Thermodesulfovibrionales</taxon>
        <taxon>Thermodesulfovibrionaceae</taxon>
        <taxon>Thermodesulfovibrio</taxon>
    </lineage>
</organism>
<name>RIMP_THEYD</name>
<evidence type="ECO:0000255" key="1">
    <source>
        <dbReference type="HAMAP-Rule" id="MF_01077"/>
    </source>
</evidence>
<accession>B5YJX5</accession>
<keyword id="KW-0963">Cytoplasm</keyword>
<keyword id="KW-1185">Reference proteome</keyword>
<keyword id="KW-0690">Ribosome biogenesis</keyword>
<protein>
    <recommendedName>
        <fullName evidence="1">Ribosome maturation factor RimP</fullName>
    </recommendedName>
</protein>
<reference key="1">
    <citation type="submission" date="2008-08" db="EMBL/GenBank/DDBJ databases">
        <title>The complete genome sequence of Thermodesulfovibrio yellowstonii strain ATCC 51303 / DSM 11347 / YP87.</title>
        <authorList>
            <person name="Dodson R.J."/>
            <person name="Durkin A.S."/>
            <person name="Wu M."/>
            <person name="Eisen J."/>
            <person name="Sutton G."/>
        </authorList>
    </citation>
    <scope>NUCLEOTIDE SEQUENCE [LARGE SCALE GENOMIC DNA]</scope>
    <source>
        <strain>ATCC 51303 / DSM 11347 / YP87</strain>
    </source>
</reference>
<sequence>MNIKELKDKITDYANIVGEQEGVEIVNVEIYPGGKGLTLRIFIDKEGGVTIKDCENFSRAIEAILDVEDPIKSSYTLEVSSPGIDRPLKNKKDFLRNIGRDVKITTKEKIADNTFFIGKIVDVGDDWVRIEIQETKIKGSKKKGKTELLFIPFNKIIKAQVYLG</sequence>
<comment type="function">
    <text evidence="1">Required for maturation of 30S ribosomal subunits.</text>
</comment>
<comment type="subcellular location">
    <subcellularLocation>
        <location evidence="1">Cytoplasm</location>
    </subcellularLocation>
</comment>
<comment type="similarity">
    <text evidence="1">Belongs to the RimP family.</text>
</comment>
<gene>
    <name evidence="1" type="primary">rimP</name>
    <name type="ordered locus">THEYE_A0698</name>
</gene>
<dbReference type="EMBL" id="CP001147">
    <property type="protein sequence ID" value="ACI20661.1"/>
    <property type="molecule type" value="Genomic_DNA"/>
</dbReference>
<dbReference type="RefSeq" id="WP_012545395.1">
    <property type="nucleotide sequence ID" value="NC_011296.1"/>
</dbReference>
<dbReference type="RefSeq" id="YP_002248540.1">
    <property type="nucleotide sequence ID" value="NC_011296.1"/>
</dbReference>
<dbReference type="SMR" id="B5YJX5"/>
<dbReference type="FunCoup" id="B5YJX5">
    <property type="interactions" value="295"/>
</dbReference>
<dbReference type="STRING" id="289376.THEYE_A0698"/>
<dbReference type="EnsemblBacteria" id="ACI20661">
    <property type="protein sequence ID" value="ACI20661"/>
    <property type="gene ID" value="THEYE_A0698"/>
</dbReference>
<dbReference type="KEGG" id="tye:THEYE_A0698"/>
<dbReference type="PATRIC" id="fig|289376.4.peg.691"/>
<dbReference type="eggNOG" id="COG0779">
    <property type="taxonomic scope" value="Bacteria"/>
</dbReference>
<dbReference type="HOGENOM" id="CLU_070525_2_2_0"/>
<dbReference type="InParanoid" id="B5YJX5"/>
<dbReference type="OrthoDB" id="9805006at2"/>
<dbReference type="Proteomes" id="UP000000718">
    <property type="component" value="Chromosome"/>
</dbReference>
<dbReference type="GO" id="GO:0005829">
    <property type="term" value="C:cytosol"/>
    <property type="evidence" value="ECO:0000318"/>
    <property type="project" value="GO_Central"/>
</dbReference>
<dbReference type="GO" id="GO:0000028">
    <property type="term" value="P:ribosomal small subunit assembly"/>
    <property type="evidence" value="ECO:0000318"/>
    <property type="project" value="GO_Central"/>
</dbReference>
<dbReference type="GO" id="GO:0006412">
    <property type="term" value="P:translation"/>
    <property type="evidence" value="ECO:0000318"/>
    <property type="project" value="GO_Central"/>
</dbReference>
<dbReference type="CDD" id="cd01734">
    <property type="entry name" value="YlxS_C"/>
    <property type="match status" value="1"/>
</dbReference>
<dbReference type="FunFam" id="2.30.30.180:FF:000011">
    <property type="entry name" value="Ribosome maturation factor RimP"/>
    <property type="match status" value="1"/>
</dbReference>
<dbReference type="FunFam" id="3.30.300.70:FF:000001">
    <property type="entry name" value="Ribosome maturation factor RimP"/>
    <property type="match status" value="1"/>
</dbReference>
<dbReference type="Gene3D" id="2.30.30.180">
    <property type="entry name" value="Ribosome maturation factor RimP, C-terminal domain"/>
    <property type="match status" value="1"/>
</dbReference>
<dbReference type="Gene3D" id="3.30.300.70">
    <property type="entry name" value="RimP-like superfamily, N-terminal"/>
    <property type="match status" value="1"/>
</dbReference>
<dbReference type="HAMAP" id="MF_01077">
    <property type="entry name" value="RimP"/>
    <property type="match status" value="1"/>
</dbReference>
<dbReference type="InterPro" id="IPR003728">
    <property type="entry name" value="Ribosome_maturation_RimP"/>
</dbReference>
<dbReference type="InterPro" id="IPR028998">
    <property type="entry name" value="RimP_C"/>
</dbReference>
<dbReference type="InterPro" id="IPR036847">
    <property type="entry name" value="RimP_C_sf"/>
</dbReference>
<dbReference type="InterPro" id="IPR028989">
    <property type="entry name" value="RimP_N"/>
</dbReference>
<dbReference type="InterPro" id="IPR035956">
    <property type="entry name" value="RimP_N_sf"/>
</dbReference>
<dbReference type="PANTHER" id="PTHR33867">
    <property type="entry name" value="RIBOSOME MATURATION FACTOR RIMP"/>
    <property type="match status" value="1"/>
</dbReference>
<dbReference type="PANTHER" id="PTHR33867:SF1">
    <property type="entry name" value="RIBOSOME MATURATION FACTOR RIMP"/>
    <property type="match status" value="1"/>
</dbReference>
<dbReference type="Pfam" id="PF17384">
    <property type="entry name" value="DUF150_C"/>
    <property type="match status" value="1"/>
</dbReference>
<dbReference type="Pfam" id="PF02576">
    <property type="entry name" value="RimP_N"/>
    <property type="match status" value="1"/>
</dbReference>
<dbReference type="SUPFAM" id="SSF74942">
    <property type="entry name" value="YhbC-like, C-terminal domain"/>
    <property type="match status" value="1"/>
</dbReference>
<dbReference type="SUPFAM" id="SSF75420">
    <property type="entry name" value="YhbC-like, N-terminal domain"/>
    <property type="match status" value="1"/>
</dbReference>